<evidence type="ECO:0000255" key="1">
    <source>
        <dbReference type="HAMAP-Rule" id="MF_01227"/>
    </source>
</evidence>
<protein>
    <recommendedName>
        <fullName evidence="1">CTP synthase</fullName>
        <ecNumber evidence="1">6.3.4.2</ecNumber>
    </recommendedName>
    <alternativeName>
        <fullName evidence="1">Cytidine 5'-triphosphate synthase</fullName>
    </alternativeName>
    <alternativeName>
        <fullName evidence="1">Cytidine triphosphate synthetase</fullName>
        <shortName evidence="1">CTP synthetase</shortName>
        <shortName evidence="1">CTPS</shortName>
    </alternativeName>
    <alternativeName>
        <fullName evidence="1">UTP--ammonia ligase</fullName>
    </alternativeName>
</protein>
<accession>A1APF9</accession>
<comment type="function">
    <text evidence="1">Catalyzes the ATP-dependent amination of UTP to CTP with either L-glutamine or ammonia as the source of nitrogen. Regulates intracellular CTP levels through interactions with the four ribonucleotide triphosphates.</text>
</comment>
<comment type="catalytic activity">
    <reaction evidence="1">
        <text>UTP + L-glutamine + ATP + H2O = CTP + L-glutamate + ADP + phosphate + 2 H(+)</text>
        <dbReference type="Rhea" id="RHEA:26426"/>
        <dbReference type="ChEBI" id="CHEBI:15377"/>
        <dbReference type="ChEBI" id="CHEBI:15378"/>
        <dbReference type="ChEBI" id="CHEBI:29985"/>
        <dbReference type="ChEBI" id="CHEBI:30616"/>
        <dbReference type="ChEBI" id="CHEBI:37563"/>
        <dbReference type="ChEBI" id="CHEBI:43474"/>
        <dbReference type="ChEBI" id="CHEBI:46398"/>
        <dbReference type="ChEBI" id="CHEBI:58359"/>
        <dbReference type="ChEBI" id="CHEBI:456216"/>
        <dbReference type="EC" id="6.3.4.2"/>
    </reaction>
</comment>
<comment type="catalytic activity">
    <reaction evidence="1">
        <text>L-glutamine + H2O = L-glutamate + NH4(+)</text>
        <dbReference type="Rhea" id="RHEA:15889"/>
        <dbReference type="ChEBI" id="CHEBI:15377"/>
        <dbReference type="ChEBI" id="CHEBI:28938"/>
        <dbReference type="ChEBI" id="CHEBI:29985"/>
        <dbReference type="ChEBI" id="CHEBI:58359"/>
    </reaction>
</comment>
<comment type="catalytic activity">
    <reaction evidence="1">
        <text>UTP + NH4(+) + ATP = CTP + ADP + phosphate + 2 H(+)</text>
        <dbReference type="Rhea" id="RHEA:16597"/>
        <dbReference type="ChEBI" id="CHEBI:15378"/>
        <dbReference type="ChEBI" id="CHEBI:28938"/>
        <dbReference type="ChEBI" id="CHEBI:30616"/>
        <dbReference type="ChEBI" id="CHEBI:37563"/>
        <dbReference type="ChEBI" id="CHEBI:43474"/>
        <dbReference type="ChEBI" id="CHEBI:46398"/>
        <dbReference type="ChEBI" id="CHEBI:456216"/>
    </reaction>
</comment>
<comment type="activity regulation">
    <text evidence="1">Allosterically activated by GTP, when glutamine is the substrate; GTP has no effect on the reaction when ammonia is the substrate. The allosteric effector GTP functions by stabilizing the protein conformation that binds the tetrahedral intermediate(s) formed during glutamine hydrolysis. Inhibited by the product CTP, via allosteric rather than competitive inhibition.</text>
</comment>
<comment type="pathway">
    <text evidence="1">Pyrimidine metabolism; CTP biosynthesis via de novo pathway; CTP from UDP: step 2/2.</text>
</comment>
<comment type="subunit">
    <text evidence="1">Homotetramer.</text>
</comment>
<comment type="miscellaneous">
    <text evidence="1">CTPSs have evolved a hybrid strategy for distinguishing between UTP and CTP. The overlapping regions of the product feedback inhibitory and substrate sites recognize a common feature in both compounds, the triphosphate moiety. To differentiate isosteric substrate and product pyrimidine rings, an additional pocket far from the expected kinase/ligase catalytic site, specifically recognizes the cytosine and ribose portions of the product inhibitor.</text>
</comment>
<comment type="similarity">
    <text evidence="1">Belongs to the CTP synthase family.</text>
</comment>
<gene>
    <name evidence="1" type="primary">pyrG</name>
    <name type="ordered locus">Ppro_1614</name>
</gene>
<organism>
    <name type="scientific">Pelobacter propionicus (strain DSM 2379 / NBRC 103807 / OttBd1)</name>
    <dbReference type="NCBI Taxonomy" id="338966"/>
    <lineage>
        <taxon>Bacteria</taxon>
        <taxon>Pseudomonadati</taxon>
        <taxon>Thermodesulfobacteriota</taxon>
        <taxon>Desulfuromonadia</taxon>
        <taxon>Desulfuromonadales</taxon>
        <taxon>Desulfuromonadaceae</taxon>
        <taxon>Pelobacter</taxon>
    </lineage>
</organism>
<name>PYRG_PELPD</name>
<feature type="chain" id="PRO_1000139513" description="CTP synthase">
    <location>
        <begin position="1"/>
        <end position="535"/>
    </location>
</feature>
<feature type="domain" description="Glutamine amidotransferase type-1" evidence="1">
    <location>
        <begin position="292"/>
        <end position="534"/>
    </location>
</feature>
<feature type="region of interest" description="Amidoligase domain" evidence="1">
    <location>
        <begin position="1"/>
        <end position="266"/>
    </location>
</feature>
<feature type="active site" description="Nucleophile; for glutamine hydrolysis" evidence="1">
    <location>
        <position position="381"/>
    </location>
</feature>
<feature type="active site" evidence="1">
    <location>
        <position position="507"/>
    </location>
</feature>
<feature type="active site" evidence="1">
    <location>
        <position position="509"/>
    </location>
</feature>
<feature type="binding site" evidence="1">
    <location>
        <position position="14"/>
    </location>
    <ligand>
        <name>CTP</name>
        <dbReference type="ChEBI" id="CHEBI:37563"/>
        <note>allosteric inhibitor</note>
    </ligand>
</feature>
<feature type="binding site" evidence="1">
    <location>
        <position position="14"/>
    </location>
    <ligand>
        <name>UTP</name>
        <dbReference type="ChEBI" id="CHEBI:46398"/>
    </ligand>
</feature>
<feature type="binding site" evidence="1">
    <location>
        <begin position="15"/>
        <end position="20"/>
    </location>
    <ligand>
        <name>ATP</name>
        <dbReference type="ChEBI" id="CHEBI:30616"/>
    </ligand>
</feature>
<feature type="binding site" evidence="1">
    <location>
        <position position="72"/>
    </location>
    <ligand>
        <name>ATP</name>
        <dbReference type="ChEBI" id="CHEBI:30616"/>
    </ligand>
</feature>
<feature type="binding site" evidence="1">
    <location>
        <position position="72"/>
    </location>
    <ligand>
        <name>Mg(2+)</name>
        <dbReference type="ChEBI" id="CHEBI:18420"/>
    </ligand>
</feature>
<feature type="binding site" evidence="1">
    <location>
        <position position="140"/>
    </location>
    <ligand>
        <name>Mg(2+)</name>
        <dbReference type="ChEBI" id="CHEBI:18420"/>
    </ligand>
</feature>
<feature type="binding site" evidence="1">
    <location>
        <begin position="147"/>
        <end position="149"/>
    </location>
    <ligand>
        <name>CTP</name>
        <dbReference type="ChEBI" id="CHEBI:37563"/>
        <note>allosteric inhibitor</note>
    </ligand>
</feature>
<feature type="binding site" evidence="1">
    <location>
        <begin position="187"/>
        <end position="192"/>
    </location>
    <ligand>
        <name>CTP</name>
        <dbReference type="ChEBI" id="CHEBI:37563"/>
        <note>allosteric inhibitor</note>
    </ligand>
</feature>
<feature type="binding site" evidence="1">
    <location>
        <begin position="187"/>
        <end position="192"/>
    </location>
    <ligand>
        <name>UTP</name>
        <dbReference type="ChEBI" id="CHEBI:46398"/>
    </ligand>
</feature>
<feature type="binding site" evidence="1">
    <location>
        <position position="223"/>
    </location>
    <ligand>
        <name>CTP</name>
        <dbReference type="ChEBI" id="CHEBI:37563"/>
        <note>allosteric inhibitor</note>
    </ligand>
</feature>
<feature type="binding site" evidence="1">
    <location>
        <position position="223"/>
    </location>
    <ligand>
        <name>UTP</name>
        <dbReference type="ChEBI" id="CHEBI:46398"/>
    </ligand>
</feature>
<feature type="binding site" evidence="1">
    <location>
        <position position="354"/>
    </location>
    <ligand>
        <name>L-glutamine</name>
        <dbReference type="ChEBI" id="CHEBI:58359"/>
    </ligand>
</feature>
<feature type="binding site" evidence="1">
    <location>
        <begin position="382"/>
        <end position="385"/>
    </location>
    <ligand>
        <name>L-glutamine</name>
        <dbReference type="ChEBI" id="CHEBI:58359"/>
    </ligand>
</feature>
<feature type="binding site" evidence="1">
    <location>
        <position position="405"/>
    </location>
    <ligand>
        <name>L-glutamine</name>
        <dbReference type="ChEBI" id="CHEBI:58359"/>
    </ligand>
</feature>
<feature type="binding site" evidence="1">
    <location>
        <position position="462"/>
    </location>
    <ligand>
        <name>L-glutamine</name>
        <dbReference type="ChEBI" id="CHEBI:58359"/>
    </ligand>
</feature>
<dbReference type="EC" id="6.3.4.2" evidence="1"/>
<dbReference type="EMBL" id="CP000482">
    <property type="protein sequence ID" value="ABK99229.1"/>
    <property type="molecule type" value="Genomic_DNA"/>
</dbReference>
<dbReference type="RefSeq" id="WP_011735519.1">
    <property type="nucleotide sequence ID" value="NC_008609.1"/>
</dbReference>
<dbReference type="SMR" id="A1APF9"/>
<dbReference type="STRING" id="338966.Ppro_1614"/>
<dbReference type="KEGG" id="ppd:Ppro_1614"/>
<dbReference type="eggNOG" id="COG0504">
    <property type="taxonomic scope" value="Bacteria"/>
</dbReference>
<dbReference type="HOGENOM" id="CLU_011675_5_0_7"/>
<dbReference type="OrthoDB" id="9801107at2"/>
<dbReference type="UniPathway" id="UPA00159">
    <property type="reaction ID" value="UER00277"/>
</dbReference>
<dbReference type="Proteomes" id="UP000006732">
    <property type="component" value="Chromosome"/>
</dbReference>
<dbReference type="GO" id="GO:0005829">
    <property type="term" value="C:cytosol"/>
    <property type="evidence" value="ECO:0007669"/>
    <property type="project" value="TreeGrafter"/>
</dbReference>
<dbReference type="GO" id="GO:0005524">
    <property type="term" value="F:ATP binding"/>
    <property type="evidence" value="ECO:0007669"/>
    <property type="project" value="UniProtKB-KW"/>
</dbReference>
<dbReference type="GO" id="GO:0003883">
    <property type="term" value="F:CTP synthase activity"/>
    <property type="evidence" value="ECO:0007669"/>
    <property type="project" value="UniProtKB-UniRule"/>
</dbReference>
<dbReference type="GO" id="GO:0004359">
    <property type="term" value="F:glutaminase activity"/>
    <property type="evidence" value="ECO:0007669"/>
    <property type="project" value="RHEA"/>
</dbReference>
<dbReference type="GO" id="GO:0042802">
    <property type="term" value="F:identical protein binding"/>
    <property type="evidence" value="ECO:0007669"/>
    <property type="project" value="TreeGrafter"/>
</dbReference>
<dbReference type="GO" id="GO:0046872">
    <property type="term" value="F:metal ion binding"/>
    <property type="evidence" value="ECO:0007669"/>
    <property type="project" value="UniProtKB-KW"/>
</dbReference>
<dbReference type="GO" id="GO:0044210">
    <property type="term" value="P:'de novo' CTP biosynthetic process"/>
    <property type="evidence" value="ECO:0007669"/>
    <property type="project" value="UniProtKB-UniRule"/>
</dbReference>
<dbReference type="GO" id="GO:0019856">
    <property type="term" value="P:pyrimidine nucleobase biosynthetic process"/>
    <property type="evidence" value="ECO:0007669"/>
    <property type="project" value="TreeGrafter"/>
</dbReference>
<dbReference type="CDD" id="cd03113">
    <property type="entry name" value="CTPS_N"/>
    <property type="match status" value="1"/>
</dbReference>
<dbReference type="CDD" id="cd01746">
    <property type="entry name" value="GATase1_CTP_Synthase"/>
    <property type="match status" value="1"/>
</dbReference>
<dbReference type="FunFam" id="3.40.50.300:FF:000009">
    <property type="entry name" value="CTP synthase"/>
    <property type="match status" value="1"/>
</dbReference>
<dbReference type="FunFam" id="3.40.50.880:FF:000002">
    <property type="entry name" value="CTP synthase"/>
    <property type="match status" value="1"/>
</dbReference>
<dbReference type="Gene3D" id="3.40.50.880">
    <property type="match status" value="1"/>
</dbReference>
<dbReference type="Gene3D" id="3.40.50.300">
    <property type="entry name" value="P-loop containing nucleotide triphosphate hydrolases"/>
    <property type="match status" value="1"/>
</dbReference>
<dbReference type="HAMAP" id="MF_01227">
    <property type="entry name" value="PyrG"/>
    <property type="match status" value="1"/>
</dbReference>
<dbReference type="InterPro" id="IPR029062">
    <property type="entry name" value="Class_I_gatase-like"/>
</dbReference>
<dbReference type="InterPro" id="IPR004468">
    <property type="entry name" value="CTP_synthase"/>
</dbReference>
<dbReference type="InterPro" id="IPR017456">
    <property type="entry name" value="CTP_synthase_N"/>
</dbReference>
<dbReference type="InterPro" id="IPR017926">
    <property type="entry name" value="GATASE"/>
</dbReference>
<dbReference type="InterPro" id="IPR033828">
    <property type="entry name" value="GATase1_CTP_Synthase"/>
</dbReference>
<dbReference type="InterPro" id="IPR027417">
    <property type="entry name" value="P-loop_NTPase"/>
</dbReference>
<dbReference type="NCBIfam" id="NF003792">
    <property type="entry name" value="PRK05380.1"/>
    <property type="match status" value="1"/>
</dbReference>
<dbReference type="NCBIfam" id="TIGR00337">
    <property type="entry name" value="PyrG"/>
    <property type="match status" value="1"/>
</dbReference>
<dbReference type="PANTHER" id="PTHR11550">
    <property type="entry name" value="CTP SYNTHASE"/>
    <property type="match status" value="1"/>
</dbReference>
<dbReference type="PANTHER" id="PTHR11550:SF0">
    <property type="entry name" value="CTP SYNTHASE-RELATED"/>
    <property type="match status" value="1"/>
</dbReference>
<dbReference type="Pfam" id="PF06418">
    <property type="entry name" value="CTP_synth_N"/>
    <property type="match status" value="1"/>
</dbReference>
<dbReference type="Pfam" id="PF00117">
    <property type="entry name" value="GATase"/>
    <property type="match status" value="1"/>
</dbReference>
<dbReference type="SUPFAM" id="SSF52317">
    <property type="entry name" value="Class I glutamine amidotransferase-like"/>
    <property type="match status" value="1"/>
</dbReference>
<dbReference type="SUPFAM" id="SSF52540">
    <property type="entry name" value="P-loop containing nucleoside triphosphate hydrolases"/>
    <property type="match status" value="1"/>
</dbReference>
<dbReference type="PROSITE" id="PS51273">
    <property type="entry name" value="GATASE_TYPE_1"/>
    <property type="match status" value="1"/>
</dbReference>
<reference key="1">
    <citation type="submission" date="2006-10" db="EMBL/GenBank/DDBJ databases">
        <title>Complete sequence of chromosome of Pelobacter propionicus DSM 2379.</title>
        <authorList>
            <consortium name="US DOE Joint Genome Institute"/>
            <person name="Copeland A."/>
            <person name="Lucas S."/>
            <person name="Lapidus A."/>
            <person name="Barry K."/>
            <person name="Detter J.C."/>
            <person name="Glavina del Rio T."/>
            <person name="Hammon N."/>
            <person name="Israni S."/>
            <person name="Dalin E."/>
            <person name="Tice H."/>
            <person name="Pitluck S."/>
            <person name="Saunders E."/>
            <person name="Brettin T."/>
            <person name="Bruce D."/>
            <person name="Han C."/>
            <person name="Tapia R."/>
            <person name="Schmutz J."/>
            <person name="Larimer F."/>
            <person name="Land M."/>
            <person name="Hauser L."/>
            <person name="Kyrpides N."/>
            <person name="Kim E."/>
            <person name="Lovley D."/>
            <person name="Richardson P."/>
        </authorList>
    </citation>
    <scope>NUCLEOTIDE SEQUENCE [LARGE SCALE GENOMIC DNA]</scope>
    <source>
        <strain>DSM 2379 / NBRC 103807 / OttBd1</strain>
    </source>
</reference>
<keyword id="KW-0067">ATP-binding</keyword>
<keyword id="KW-0315">Glutamine amidotransferase</keyword>
<keyword id="KW-0436">Ligase</keyword>
<keyword id="KW-0460">Magnesium</keyword>
<keyword id="KW-0479">Metal-binding</keyword>
<keyword id="KW-0547">Nucleotide-binding</keyword>
<keyword id="KW-0665">Pyrimidine biosynthesis</keyword>
<keyword id="KW-1185">Reference proteome</keyword>
<sequence length="535" mass="59645">MKTKFIFITGGVVSSIGKGLAAASLGALLEARGLRVTLQKLDPYINVDPGTMSPFQHGEVFVTDDGAETDLDLGHYERFTNARLSKKSNFTTGQVYFSVIDKERRGDYLGGTVQVIPHITDEMKCKIIENAKGADVAIVEVGGTVGDIESLPFLEAIRQFRFDRGAGNTLYVHVTLVPYIRTAGELKTKPTQHSVMELRKIGIQPDILLCRSEREIPQEMKNKIALFCNVDVKDVIPVVDSEHIYYVPLALSKERLDERVVEKLNIWTKAPDLTPWQDVVETVCHPGHGEVRIAIVGKYVNLTESYKSLSEALTHGGIANDCRVSLKYIDSEKIERDGIDGHLVDMDAVLVPGGFGERGTEGKVMAIEYARLHKIPFFGICLGMQMAVVEYARNVCHIDDACSSEFKKGCGNPVIHLMEEQKSVSKKGGTMRLGGYPCSLEKGTLAHVAYNAQEISERHRHRYEFNNAYREVLTKNGLILSGIYRDKDLVEVVEIADHPWFLGCQFHPEFKSKPLAPHPLFKSFVRAALIQRDAR</sequence>
<proteinExistence type="inferred from homology"/>